<name>GLGB1_RHIEC</name>
<keyword id="KW-0119">Carbohydrate metabolism</keyword>
<keyword id="KW-0320">Glycogen biosynthesis</keyword>
<keyword id="KW-0321">Glycogen metabolism</keyword>
<keyword id="KW-0328">Glycosyltransferase</keyword>
<keyword id="KW-1185">Reference proteome</keyword>
<keyword id="KW-0808">Transferase</keyword>
<comment type="function">
    <text evidence="1">Catalyzes the formation of the alpha-1,6-glucosidic linkages in glycogen by scission of a 1,4-alpha-linked oligosaccharide from growing alpha-1,4-glucan chains and the subsequent attachment of the oligosaccharide to the alpha-1,6 position.</text>
</comment>
<comment type="catalytic activity">
    <reaction evidence="1">
        <text>Transfers a segment of a (1-&gt;4)-alpha-D-glucan chain to a primary hydroxy group in a similar glucan chain.</text>
        <dbReference type="EC" id="2.4.1.18"/>
    </reaction>
</comment>
<comment type="pathway">
    <text evidence="1">Glycan biosynthesis; glycogen biosynthesis.</text>
</comment>
<comment type="subunit">
    <text evidence="1">Monomer.</text>
</comment>
<comment type="similarity">
    <text evidence="1">Belongs to the glycosyl hydrolase 13 family. GlgB subfamily.</text>
</comment>
<evidence type="ECO:0000255" key="1">
    <source>
        <dbReference type="HAMAP-Rule" id="MF_00685"/>
    </source>
</evidence>
<dbReference type="EC" id="2.4.1.18" evidence="1"/>
<dbReference type="EMBL" id="CP000133">
    <property type="protein sequence ID" value="ABC92349.1"/>
    <property type="molecule type" value="Genomic_DNA"/>
</dbReference>
<dbReference type="RefSeq" id="WP_011426809.1">
    <property type="nucleotide sequence ID" value="NC_007761.1"/>
</dbReference>
<dbReference type="SMR" id="Q2K487"/>
<dbReference type="CAZy" id="CBM48">
    <property type="family name" value="Carbohydrate-Binding Module Family 48"/>
</dbReference>
<dbReference type="CAZy" id="GH13">
    <property type="family name" value="Glycoside Hydrolase Family 13"/>
</dbReference>
<dbReference type="KEGG" id="ret:RHE_CH03594"/>
<dbReference type="eggNOG" id="COG0296">
    <property type="taxonomic scope" value="Bacteria"/>
</dbReference>
<dbReference type="HOGENOM" id="CLU_004245_3_2_5"/>
<dbReference type="OrthoDB" id="9800174at2"/>
<dbReference type="UniPathway" id="UPA00164"/>
<dbReference type="Proteomes" id="UP000001936">
    <property type="component" value="Chromosome"/>
</dbReference>
<dbReference type="GO" id="GO:0005829">
    <property type="term" value="C:cytosol"/>
    <property type="evidence" value="ECO:0007669"/>
    <property type="project" value="TreeGrafter"/>
</dbReference>
<dbReference type="GO" id="GO:0003844">
    <property type="term" value="F:1,4-alpha-glucan branching enzyme activity"/>
    <property type="evidence" value="ECO:0007669"/>
    <property type="project" value="UniProtKB-UniRule"/>
</dbReference>
<dbReference type="GO" id="GO:0043169">
    <property type="term" value="F:cation binding"/>
    <property type="evidence" value="ECO:0007669"/>
    <property type="project" value="InterPro"/>
</dbReference>
<dbReference type="GO" id="GO:0004553">
    <property type="term" value="F:hydrolase activity, hydrolyzing O-glycosyl compounds"/>
    <property type="evidence" value="ECO:0007669"/>
    <property type="project" value="InterPro"/>
</dbReference>
<dbReference type="GO" id="GO:0005978">
    <property type="term" value="P:glycogen biosynthetic process"/>
    <property type="evidence" value="ECO:0007669"/>
    <property type="project" value="UniProtKB-UniRule"/>
</dbReference>
<dbReference type="CDD" id="cd11322">
    <property type="entry name" value="AmyAc_Glg_BE"/>
    <property type="match status" value="1"/>
</dbReference>
<dbReference type="CDD" id="cd02855">
    <property type="entry name" value="E_set_GBE_prok_N"/>
    <property type="match status" value="1"/>
</dbReference>
<dbReference type="FunFam" id="2.60.40.10:FF:000169">
    <property type="entry name" value="1,4-alpha-glucan branching enzyme GlgB"/>
    <property type="match status" value="1"/>
</dbReference>
<dbReference type="FunFam" id="2.60.40.1180:FF:000002">
    <property type="entry name" value="1,4-alpha-glucan branching enzyme GlgB"/>
    <property type="match status" value="1"/>
</dbReference>
<dbReference type="FunFam" id="3.20.20.80:FF:000003">
    <property type="entry name" value="1,4-alpha-glucan branching enzyme GlgB"/>
    <property type="match status" value="1"/>
</dbReference>
<dbReference type="Gene3D" id="3.20.20.80">
    <property type="entry name" value="Glycosidases"/>
    <property type="match status" value="1"/>
</dbReference>
<dbReference type="Gene3D" id="2.60.40.1180">
    <property type="entry name" value="Golgi alpha-mannosidase II"/>
    <property type="match status" value="1"/>
</dbReference>
<dbReference type="Gene3D" id="2.60.40.10">
    <property type="entry name" value="Immunoglobulins"/>
    <property type="match status" value="1"/>
</dbReference>
<dbReference type="HAMAP" id="MF_00685">
    <property type="entry name" value="GlgB"/>
    <property type="match status" value="1"/>
</dbReference>
<dbReference type="InterPro" id="IPR006048">
    <property type="entry name" value="A-amylase/branching_C"/>
</dbReference>
<dbReference type="InterPro" id="IPR037439">
    <property type="entry name" value="Branching_enzy"/>
</dbReference>
<dbReference type="InterPro" id="IPR006407">
    <property type="entry name" value="GlgB"/>
</dbReference>
<dbReference type="InterPro" id="IPR054169">
    <property type="entry name" value="GlgB_N"/>
</dbReference>
<dbReference type="InterPro" id="IPR044143">
    <property type="entry name" value="GlgB_N_E_set_prok"/>
</dbReference>
<dbReference type="InterPro" id="IPR006047">
    <property type="entry name" value="Glyco_hydro_13_cat_dom"/>
</dbReference>
<dbReference type="InterPro" id="IPR004193">
    <property type="entry name" value="Glyco_hydro_13_N"/>
</dbReference>
<dbReference type="InterPro" id="IPR013780">
    <property type="entry name" value="Glyco_hydro_b"/>
</dbReference>
<dbReference type="InterPro" id="IPR017853">
    <property type="entry name" value="Glycoside_hydrolase_SF"/>
</dbReference>
<dbReference type="InterPro" id="IPR013783">
    <property type="entry name" value="Ig-like_fold"/>
</dbReference>
<dbReference type="InterPro" id="IPR014756">
    <property type="entry name" value="Ig_E-set"/>
</dbReference>
<dbReference type="NCBIfam" id="TIGR01515">
    <property type="entry name" value="branching_enzym"/>
    <property type="match status" value="1"/>
</dbReference>
<dbReference type="NCBIfam" id="NF003811">
    <property type="entry name" value="PRK05402.1"/>
    <property type="match status" value="1"/>
</dbReference>
<dbReference type="NCBIfam" id="NF008967">
    <property type="entry name" value="PRK12313.1"/>
    <property type="match status" value="1"/>
</dbReference>
<dbReference type="PANTHER" id="PTHR43651">
    <property type="entry name" value="1,4-ALPHA-GLUCAN-BRANCHING ENZYME"/>
    <property type="match status" value="1"/>
</dbReference>
<dbReference type="PANTHER" id="PTHR43651:SF3">
    <property type="entry name" value="1,4-ALPHA-GLUCAN-BRANCHING ENZYME"/>
    <property type="match status" value="1"/>
</dbReference>
<dbReference type="Pfam" id="PF00128">
    <property type="entry name" value="Alpha-amylase"/>
    <property type="match status" value="1"/>
</dbReference>
<dbReference type="Pfam" id="PF02806">
    <property type="entry name" value="Alpha-amylase_C"/>
    <property type="match status" value="1"/>
</dbReference>
<dbReference type="Pfam" id="PF02922">
    <property type="entry name" value="CBM_48"/>
    <property type="match status" value="1"/>
</dbReference>
<dbReference type="Pfam" id="PF22019">
    <property type="entry name" value="GlgB_N"/>
    <property type="match status" value="1"/>
</dbReference>
<dbReference type="PIRSF" id="PIRSF000463">
    <property type="entry name" value="GlgB"/>
    <property type="match status" value="1"/>
</dbReference>
<dbReference type="SMART" id="SM00642">
    <property type="entry name" value="Aamy"/>
    <property type="match status" value="1"/>
</dbReference>
<dbReference type="SUPFAM" id="SSF51445">
    <property type="entry name" value="(Trans)glycosidases"/>
    <property type="match status" value="1"/>
</dbReference>
<dbReference type="SUPFAM" id="SSF81296">
    <property type="entry name" value="E set domains"/>
    <property type="match status" value="2"/>
</dbReference>
<dbReference type="SUPFAM" id="SSF51011">
    <property type="entry name" value="Glycosyl hydrolase domain"/>
    <property type="match status" value="1"/>
</dbReference>
<protein>
    <recommendedName>
        <fullName evidence="1">1,4-alpha-glucan branching enzyme GlgB 1</fullName>
        <ecNumber evidence="1">2.4.1.18</ecNumber>
    </recommendedName>
    <alternativeName>
        <fullName evidence="1">1,4-alpha-D-glucan:1,4-alpha-D-glucan 6-glucosyl-transferase 1</fullName>
    </alternativeName>
    <alternativeName>
        <fullName evidence="1">Alpha-(1-&gt;4)-glucan branching enzyme 1</fullName>
    </alternativeName>
    <alternativeName>
        <fullName evidence="1">Glycogen branching enzyme 1</fullName>
        <shortName evidence="1">BE 1</shortName>
    </alternativeName>
</protein>
<gene>
    <name evidence="1" type="primary">glgB1</name>
    <name type="ordered locus">RHE_CH03594</name>
</gene>
<accession>Q2K487</accession>
<sequence>MKTPKTLPEVTLSWEISADEITAILAGSHSNPFAVLGVHQGGDAFVARCFIPGAEEVTAMTLDGGFIGELKQLHADGVFAGPVSLAKLQPVRYRARRGDAEWAVTDPYSFGPVLGPMDDYFAREGSHLRLFDKMGAHLIKHEGAQGIHFAVWAPNAQRVSVVGDFNGWDGRRHVMRFRADSGIWEIFAPDVPLGVAYKFEIRGHDGVLLPLKADPFARRSELRPKTASIAAAELEQVWEDEAHLKHWRETDKRRQPISIYEVHAGSWQRRQDGTMLSWDELASSLIPYCVDMGFTHIEFLPITEHPYDPSWGYQTTGLYAPTARFGEPEGFARFVNGCHKVGIGVILDWVPAHFPTDEHGLGWFDGTALYEHEDPRKGFHPDWNTAIYNFGRTEVVSYLVNNALYWAEKFHLDGLRVDAVASMLYLDYSRKHGEWIPNEYGGNENLEAVRFLQDLNIRIYGQHSNVMTIAEESTSWPKVSQPVHEGGLGFGFKWNMGFMHDTLSYMKRDPVHRKHHHNELTFGLLYAYSENFVLPLSHDEVVHGKGSLIAKMPGDDWQKFANLRAYYAYMWGYPGKKLLFMGQEFAQWSEWSEAKSLDWNLLQYRMHEGMRRLVRDLNFTYRSKPALHERDCEGEGFEWLVADDHQNSVFAWLRKAPGQKPVAVITNFTPVYRENYTIRLPSAGRWREILNTDADIYGGSGKGNGGRVQAVDAGGDITCSITLPPLATIMLEPEN</sequence>
<reference key="1">
    <citation type="journal article" date="2006" name="Proc. Natl. Acad. Sci. U.S.A.">
        <title>The partitioned Rhizobium etli genome: genetic and metabolic redundancy in seven interacting replicons.</title>
        <authorList>
            <person name="Gonzalez V."/>
            <person name="Santamaria R.I."/>
            <person name="Bustos P."/>
            <person name="Hernandez-Gonzalez I."/>
            <person name="Medrano-Soto A."/>
            <person name="Moreno-Hagelsieb G."/>
            <person name="Janga S.C."/>
            <person name="Ramirez M.A."/>
            <person name="Jimenez-Jacinto V."/>
            <person name="Collado-Vides J."/>
            <person name="Davila G."/>
        </authorList>
    </citation>
    <scope>NUCLEOTIDE SEQUENCE [LARGE SCALE GENOMIC DNA]</scope>
    <source>
        <strain>ATCC 51251 / DSM 11541 / JCM 21823 / NBRC 15573 / CFN 42</strain>
    </source>
</reference>
<proteinExistence type="inferred from homology"/>
<feature type="chain" id="PRO_0000260682" description="1,4-alpha-glucan branching enzyme GlgB 1">
    <location>
        <begin position="1"/>
        <end position="735"/>
    </location>
</feature>
<feature type="active site" description="Nucleophile" evidence="1">
    <location>
        <position position="418"/>
    </location>
</feature>
<feature type="active site" description="Proton donor" evidence="1">
    <location>
        <position position="471"/>
    </location>
</feature>
<organism>
    <name type="scientific">Rhizobium etli (strain ATCC 51251 / DSM 11541 / JCM 21823 / NBRC 15573 / CFN 42)</name>
    <dbReference type="NCBI Taxonomy" id="347834"/>
    <lineage>
        <taxon>Bacteria</taxon>
        <taxon>Pseudomonadati</taxon>
        <taxon>Pseudomonadota</taxon>
        <taxon>Alphaproteobacteria</taxon>
        <taxon>Hyphomicrobiales</taxon>
        <taxon>Rhizobiaceae</taxon>
        <taxon>Rhizobium/Agrobacterium group</taxon>
        <taxon>Rhizobium</taxon>
    </lineage>
</organism>